<accession>P04604</accession>
<reference key="1">
    <citation type="journal article" date="1986" name="Cell">
        <title>Genetic variability of the AIDS virus: nucleotide sequence analysis of two isolates from African patients.</title>
        <authorList>
            <person name="Alizon M."/>
            <person name="Wain-Hobson S."/>
            <person name="Montagnier L."/>
            <person name="Sonigo P."/>
        </authorList>
    </citation>
    <scope>NUCLEOTIDE SEQUENCE [GENOMIC DNA]</scope>
</reference>
<sequence length="206" mass="23613">MGGKWSKSSIVGWPAIRERIRRTNPAADGVGAVSRDLEKHGAITSSNTASTNADCAWLEAQEESDEVGFPVRPQVPLRPMTYKEALDLSHFLKEKGGLEGLIWSKKRQEILDLWVYNTQGIFPDWQNYTPGPGIRYPLTFGWCYELVPVDPQEVEEDTEGETNSLLHPICQHGMEDPERQVLKWRFNSRLAFEHKAREMHPEFYKN</sequence>
<proteinExistence type="inferred from homology"/>
<keyword id="KW-0014">AIDS</keyword>
<keyword id="KW-0053">Apoptosis</keyword>
<keyword id="KW-0244">Early protein</keyword>
<keyword id="KW-1032">Host cell membrane</keyword>
<keyword id="KW-1040">Host Golgi apparatus</keyword>
<keyword id="KW-1043">Host membrane</keyword>
<keyword id="KW-0945">Host-virus interaction</keyword>
<keyword id="KW-1080">Inhibition of host adaptive immune response by virus</keyword>
<keyword id="KW-1083">Inhibition of host autophagy by virus</keyword>
<keyword id="KW-1115">Inhibition of host MHC class I molecule presentation by virus</keyword>
<keyword id="KW-1116">Inhibition of host MHC class II molecule presentation by virus</keyword>
<keyword id="KW-0449">Lipoprotein</keyword>
<keyword id="KW-0472">Membrane</keyword>
<keyword id="KW-0519">Myristate</keyword>
<keyword id="KW-0597">Phosphoprotein</keyword>
<keyword id="KW-1185">Reference proteome</keyword>
<keyword id="KW-0964">Secreted</keyword>
<keyword id="KW-0729">SH3-binding</keyword>
<keyword id="KW-0899">Viral immunoevasion</keyword>
<keyword id="KW-0946">Virion</keyword>
<keyword id="KW-0843">Virulence</keyword>
<organismHost>
    <name type="scientific">Homo sapiens</name>
    <name type="common">Human</name>
    <dbReference type="NCBI Taxonomy" id="9606"/>
</organismHost>
<name>NEF_HV1EL</name>
<comment type="function">
    <text evidence="1">Factor of infectivity and pathogenicity, required for optimal virus replication. Alters numerous pathways of T-lymphocyte function and down-regulates immunity surface molecules in order to evade host defense and increase viral infectivity. Alters the functionality of other immunity cells, like dendritic cells, monocytes/macrophages and NK cells.</text>
</comment>
<comment type="function">
    <text evidence="1">In infected CD4(+) T-lymphocytes, down-regulates the surface MHC-I, mature MHC-II, CD4, CD28, CCR5 and CXCR4 molecules. Mediates internalization and degradation of host CD4 through the interaction of with the cytoplasmic tail of CD4, the recruitment of AP-2 (clathrin adapter protein complex 2), internalization through clathrin coated pits, and subsequent transport to endosomes and lysosomes for degradation. Diverts host MHC-I molecules to the trans-Golgi network-associated endosomal compartments by an endocytic pathway to finally target them for degradation. MHC-I down-regulation may involve AP-1 (clathrin adapter protein complex 1) or possibly Src family kinase-ZAP70/Syk-PI3K cascade recruited by PACS2. In consequence infected cells are masked for immune recognition by cytotoxic T-lymphocytes. Decreasing the number of immune receptors also prevents reinfection by more HIV particles (superinfection). Down-regulates host SERINC3 and SERINC5 thereby excluding these proteins from the viral particles. Virion infectivity is drastically higher when SERINC3 or SERINC5 are excluded from the viral envelope, because these host antiviral proteins impair the membrane fusion event necessary for subsequent virion penetration.</text>
</comment>
<comment type="function">
    <text evidence="1">Bypasses host T-cell signaling by inducing a transcriptional program nearly identical to that of anti-CD3 cell activation. Interaction with TCR-zeta chain up-regulates the Fas ligand (FasL). Increasing surface FasL molecules and decreasing surface MHC-I molecules on infected CD4(+) cells send attacking cytotoxic CD8+ T-lymphocytes into apoptosis.</text>
</comment>
<comment type="function">
    <text evidence="1">Plays a role in optimizing the host cell environment for viral replication without causing cell death by apoptosis. Protects the infected cells from apoptosis in order to keep them alive until the next virus generation is ready to strike. Inhibits the Fas and TNFR-mediated death signals by blocking MAP3K5/ASK1. Decreases the half-life of TP53, protecting the infected cell against p53-mediated apoptosis. Inhibits the apoptotic signals regulated by the Bcl-2 family proteins through the formation of a Nef/PI3-kinase/PAK2 complex that leads to activation of PAK2 and induces phosphorylation of host BAD.</text>
</comment>
<comment type="function">
    <text evidence="1">Extracellular Nef protein targets CD4(+) T-lymphocytes for apoptosis by interacting with CXCR4 surface receptors.</text>
</comment>
<comment type="subunit">
    <text evidence="1">Monomer; cytosolic form. Homodimer; membrane bound form. Interacts with Nef associated p21-activated kinase (PAK2); this interaction activates PAK2. Associates with the Nef-MHC-I-AP1 complex; this complex is required for MHC-I internalization. Interacts (via C-terminus) with host PI3-kinase. Interacts with host PACS1; this interaction seems to be weak. Interacts with host PACS2. Interacts with host LCK and MAPK3; these interactions inhibit the kinase activity of the latter. Interacts with host ATP6V1H; this interaction may play a role in CD4 endocytosis. Associates with the CD4-Nef-AP2 complex; this complex is required for CD4 internalization. Interacts with host AP2 subunit alpha and AP2 subunit sigma2. Interacts with TCR-zeta chain; this interaction up-regulates the Fas ligand (FasL) surface expression. Interacts with host HCK, LYN, and SRC; these interactions activate the Src family kinases. Interacts with MAP3K5; this interaction inhibits the Fas and TNFR-mediated death signals. Interacts with beta-COP and PTE1. Interacts with human RACK1; this increases Nef phosphorylation by PKC. Interacts with TP53; this interaction decreases the half-life of TP53, protecting the infected cell against p53-mediated apoptosis.</text>
</comment>
<comment type="subcellular location">
    <subcellularLocation>
        <location evidence="1">Host cell membrane</location>
        <topology evidence="1">Lipid-anchor</topology>
        <orientation evidence="1">Cytoplasmic side</orientation>
    </subcellularLocation>
    <subcellularLocation>
        <location evidence="1">Virion</location>
    </subcellularLocation>
    <subcellularLocation>
        <location evidence="1">Secreted</location>
    </subcellularLocation>
    <subcellularLocation>
        <location evidence="1">Host Golgi apparatus membrane</location>
    </subcellularLocation>
    <text evidence="1">TGN localization requires PACS1. Associates with the inner plasma membrane through its N-terminal domain. Nef stimulates its own export via the release of exosomes. Incorporated in virions at a rate of about 10 molecules per virion, where it is cleaved.</text>
</comment>
<comment type="induction">
    <text evidence="1">Expressed early in the viral replication cycle.</text>
</comment>
<comment type="domain">
    <text evidence="1">The N-terminal domain is composed of the N-myristoyl glycine and of a cluster of positively charged amino acids. It is required for inner plasma membrane targeting of Nef and virion incorporation, and thereby for infectivity. This domain is also involved in binding to TP53.</text>
</comment>
<comment type="domain">
    <text evidence="1">The SH3-binding domain constituted of PxxP motifs mediates binding to several Src family proteins thereby regulating their tyrosine kinase activity. The same motifs also mediates the association with MAPK3, PI3-kinase and TCR-zeta.</text>
</comment>
<comment type="domain">
    <text evidence="1">The dileucine internalization motif and a diacidic motif seem to be required for binding to AP-2.</text>
</comment>
<comment type="domain">
    <text evidence="1">The acidic region binds to the sorting protein PACS-2, which targets Nef to the paranuclear region, enabling the PxxP motif to direct assembly of an SFK/ZAP-70/PI3K complex that accelerates endocytosis of cell-surface MHC-I.</text>
</comment>
<comment type="PTM">
    <text evidence="1">The virion-associated Nef proteins are cleaved by the viral protease to release the soluble C-terminal core protein. Nef is probably cleaved concomitantly with viral structural proteins on maturation of virus particles.</text>
</comment>
<comment type="PTM">
    <text evidence="1">Myristoylated.</text>
</comment>
<comment type="PTM">
    <text evidence="1">Phosphorylated on serine residues, probably by host PKCdelta and theta.</text>
</comment>
<comment type="miscellaneous">
    <text evidence="1">HIV-1 lineages are divided in three main groups, M (for Major), O (for Outlier), and N (for New, or Non-M, Non-O). The vast majority of strains found worldwide belong to the group M. Group O seems to be endemic to and largely confined to Cameroon and neighboring countries in West Central Africa, where these viruses represent a small minority of HIV-1 strains. The group N is represented by a limited number of isolates from Cameroonian persons. The group M is further subdivided in 9 clades or subtypes (A to D, F to H, J and K).</text>
</comment>
<comment type="similarity">
    <text evidence="1">Belongs to the lentivirus primate group Nef protein family.</text>
</comment>
<feature type="initiator methionine" description="Removed; by host" evidence="1">
    <location>
        <position position="1"/>
    </location>
</feature>
<feature type="chain" id="PRO_0000038339" description="Protein Nef" evidence="1">
    <location>
        <begin position="2"/>
        <end position="206"/>
    </location>
</feature>
<feature type="chain" id="PRO_0000038340" description="C-terminal core protein" evidence="1">
    <location>
        <begin position="58"/>
        <end position="206"/>
    </location>
</feature>
<feature type="region of interest" description="Acidic; interacts with host PACS1 and PACS2; stabilizes the interaction of NEF/MHC-I with host AP1M1; necessary for MHC-I internalization" evidence="1">
    <location>
        <begin position="62"/>
        <end position="66"/>
    </location>
</feature>
<feature type="region of interest" description="SH3-binding; interaction with Src family tyrosine kinases" evidence="1">
    <location>
        <begin position="70"/>
        <end position="79"/>
    </location>
</feature>
<feature type="region of interest" description="Mediates dimerization, Nef-PTE1 interaction" evidence="1">
    <location>
        <begin position="109"/>
        <end position="125"/>
    </location>
</feature>
<feature type="region of interest" description="Binding to ATP6V1H" evidence="1">
    <location>
        <begin position="149"/>
        <end position="181"/>
    </location>
</feature>
<feature type="short sequence motif" description="PxxP; stabilizes the interaction of NEF/MHC-I with host AP1M1; necessary for MHC-I internalization" evidence="1">
    <location>
        <begin position="73"/>
        <end position="76"/>
    </location>
</feature>
<feature type="short sequence motif" description="Dileucine internalization motif; necessary for CD4 internalization" evidence="1">
    <location>
        <begin position="165"/>
        <end position="166"/>
    </location>
</feature>
<feature type="short sequence motif" description="Diacidic; necessary for CD4 internalization" evidence="1">
    <location>
        <begin position="175"/>
        <end position="176"/>
    </location>
</feature>
<feature type="site" description="Cleavage; by viral protease" evidence="1">
    <location>
        <begin position="57"/>
        <end position="58"/>
    </location>
</feature>
<feature type="modified residue" description="Phosphoserine; by host" evidence="1">
    <location>
        <position position="6"/>
    </location>
</feature>
<feature type="lipid moiety-binding region" description="N-myristoyl glycine; by host" evidence="1">
    <location>
        <position position="2"/>
    </location>
</feature>
<organism>
    <name type="scientific">Human immunodeficiency virus type 1 group M subtype D (isolate ELI)</name>
    <name type="common">HIV-1</name>
    <dbReference type="NCBI Taxonomy" id="11689"/>
    <lineage>
        <taxon>Viruses</taxon>
        <taxon>Riboviria</taxon>
        <taxon>Pararnavirae</taxon>
        <taxon>Artverviricota</taxon>
        <taxon>Revtraviricetes</taxon>
        <taxon>Ortervirales</taxon>
        <taxon>Retroviridae</taxon>
        <taxon>Orthoretrovirinae</taxon>
        <taxon>Lentivirus</taxon>
        <taxon>Human immunodeficiency virus type 1</taxon>
    </lineage>
</organism>
<evidence type="ECO:0000255" key="1">
    <source>
        <dbReference type="HAMAP-Rule" id="MF_04078"/>
    </source>
</evidence>
<gene>
    <name evidence="1" type="primary">nef</name>
</gene>
<protein>
    <recommendedName>
        <fullName evidence="1">Protein Nef</fullName>
    </recommendedName>
    <alternativeName>
        <fullName evidence="1">3'ORF</fullName>
    </alternativeName>
    <alternativeName>
        <fullName evidence="1">Negative factor</fullName>
        <shortName evidence="1">F-protein</shortName>
    </alternativeName>
    <component>
        <recommendedName>
            <fullName evidence="1">C-terminal core protein</fullName>
        </recommendedName>
    </component>
</protein>
<dbReference type="EMBL" id="K03454">
    <property type="protein sequence ID" value="AAA44330.1"/>
    <property type="molecule type" value="Genomic_DNA"/>
</dbReference>
<dbReference type="SMR" id="P04604"/>
<dbReference type="MINT" id="P04604"/>
<dbReference type="Proteomes" id="UP000007693">
    <property type="component" value="Segment"/>
</dbReference>
<dbReference type="GO" id="GO:0005576">
    <property type="term" value="C:extracellular region"/>
    <property type="evidence" value="ECO:0007669"/>
    <property type="project" value="UniProtKB-SubCell"/>
</dbReference>
<dbReference type="GO" id="GO:0044178">
    <property type="term" value="C:host cell Golgi membrane"/>
    <property type="evidence" value="ECO:0007669"/>
    <property type="project" value="UniProtKB-SubCell"/>
</dbReference>
<dbReference type="GO" id="GO:0020002">
    <property type="term" value="C:host cell plasma membrane"/>
    <property type="evidence" value="ECO:0007669"/>
    <property type="project" value="UniProtKB-SubCell"/>
</dbReference>
<dbReference type="GO" id="GO:0016020">
    <property type="term" value="C:membrane"/>
    <property type="evidence" value="ECO:0007669"/>
    <property type="project" value="UniProtKB-UniRule"/>
</dbReference>
<dbReference type="GO" id="GO:0044423">
    <property type="term" value="C:virion component"/>
    <property type="evidence" value="ECO:0007669"/>
    <property type="project" value="UniProtKB-UniRule"/>
</dbReference>
<dbReference type="GO" id="GO:0005525">
    <property type="term" value="F:GTP binding"/>
    <property type="evidence" value="ECO:0007669"/>
    <property type="project" value="UniProtKB-UniRule"/>
</dbReference>
<dbReference type="GO" id="GO:0017124">
    <property type="term" value="F:SH3 domain binding"/>
    <property type="evidence" value="ECO:0007669"/>
    <property type="project" value="UniProtKB-UniRule"/>
</dbReference>
<dbReference type="GO" id="GO:0046776">
    <property type="term" value="P:symbiont-mediated suppression of host antigen processing and presentation of peptide antigen via MHC class I"/>
    <property type="evidence" value="ECO:0007669"/>
    <property type="project" value="UniProtKB-UniRule"/>
</dbReference>
<dbReference type="GO" id="GO:0039505">
    <property type="term" value="P:symbiont-mediated suppression of host antigen processing and presentation of peptide antigen via MHC class II"/>
    <property type="evidence" value="ECO:0007669"/>
    <property type="project" value="UniProtKB-UniRule"/>
</dbReference>
<dbReference type="GO" id="GO:0140321">
    <property type="term" value="P:symbiont-mediated suppression of host autophagy"/>
    <property type="evidence" value="ECO:0007669"/>
    <property type="project" value="UniProtKB-KW"/>
</dbReference>
<dbReference type="FunFam" id="4.10.890.10:FF:000001">
    <property type="entry name" value="Protein Nef"/>
    <property type="match status" value="1"/>
</dbReference>
<dbReference type="Gene3D" id="4.10.890.10">
    <property type="entry name" value="HIV 1 nef anchor domain"/>
    <property type="match status" value="1"/>
</dbReference>
<dbReference type="Gene3D" id="3.30.62.10">
    <property type="entry name" value="Nef Regulatory Factor"/>
    <property type="match status" value="1"/>
</dbReference>
<dbReference type="HAMAP" id="MF_04078">
    <property type="entry name" value="NEF_HIV"/>
    <property type="match status" value="1"/>
</dbReference>
<dbReference type="InterPro" id="IPR027480">
    <property type="entry name" value="HIV-1_Nef_anchor_sf"/>
</dbReference>
<dbReference type="InterPro" id="IPR027481">
    <property type="entry name" value="HIV-1_Nef_core_sf"/>
</dbReference>
<dbReference type="InterPro" id="IPR001558">
    <property type="entry name" value="HIV_Nef"/>
</dbReference>
<dbReference type="Pfam" id="PF00469">
    <property type="entry name" value="F-protein"/>
    <property type="match status" value="1"/>
</dbReference>
<dbReference type="SUPFAM" id="SSF55671">
    <property type="entry name" value="Regulatory factor Nef"/>
    <property type="match status" value="1"/>
</dbReference>